<dbReference type="EMBL" id="AE005674">
    <property type="protein sequence ID" value="AAN41706.1"/>
    <property type="molecule type" value="Genomic_DNA"/>
</dbReference>
<dbReference type="EMBL" id="AE014073">
    <property type="protein sequence ID" value="AAP15586.1"/>
    <property type="molecule type" value="Genomic_DNA"/>
</dbReference>
<dbReference type="RefSeq" id="NP_705999.1">
    <property type="nucleotide sequence ID" value="NC_004337.2"/>
</dbReference>
<dbReference type="RefSeq" id="WP_001287727.1">
    <property type="nucleotide sequence ID" value="NZ_WPGW01000005.1"/>
</dbReference>
<dbReference type="SMR" id="Q83SQ7"/>
<dbReference type="STRING" id="198214.SF0040"/>
<dbReference type="PaxDb" id="198214-SF0040"/>
<dbReference type="GeneID" id="1024551"/>
<dbReference type="KEGG" id="sfl:SF0040"/>
<dbReference type="KEGG" id="sfx:S0042"/>
<dbReference type="PATRIC" id="fig|198214.7.peg.48"/>
<dbReference type="HOGENOM" id="CLU_050977_0_0_6"/>
<dbReference type="Proteomes" id="UP000001006">
    <property type="component" value="Chromosome"/>
</dbReference>
<dbReference type="Proteomes" id="UP000002673">
    <property type="component" value="Chromosome"/>
</dbReference>
<dbReference type="GO" id="GO:0071949">
    <property type="term" value="F:FAD binding"/>
    <property type="evidence" value="ECO:0007669"/>
    <property type="project" value="InterPro"/>
</dbReference>
<dbReference type="GO" id="GO:0016491">
    <property type="term" value="F:oxidoreductase activity"/>
    <property type="evidence" value="ECO:0007669"/>
    <property type="project" value="UniProtKB-KW"/>
</dbReference>
<dbReference type="Gene3D" id="3.50.50.60">
    <property type="entry name" value="FAD/NAD(P)-binding domain"/>
    <property type="match status" value="1"/>
</dbReference>
<dbReference type="InterPro" id="IPR002938">
    <property type="entry name" value="FAD-bd"/>
</dbReference>
<dbReference type="InterPro" id="IPR036188">
    <property type="entry name" value="FAD/NAD-bd_sf"/>
</dbReference>
<dbReference type="InterPro" id="IPR039651">
    <property type="entry name" value="FixC-like"/>
</dbReference>
<dbReference type="NCBIfam" id="NF007450">
    <property type="entry name" value="PRK10015.1"/>
    <property type="match status" value="1"/>
</dbReference>
<dbReference type="NCBIfam" id="NF007542">
    <property type="entry name" value="PRK10157.1"/>
    <property type="match status" value="1"/>
</dbReference>
<dbReference type="PANTHER" id="PTHR43624">
    <property type="entry name" value="ELECTRON TRANSFER FLAVOPROTEIN-QUINONE OXIDOREDUCTASE YDIS-RELATED"/>
    <property type="match status" value="1"/>
</dbReference>
<dbReference type="PANTHER" id="PTHR43624:SF1">
    <property type="entry name" value="PROTEIN FIXC"/>
    <property type="match status" value="1"/>
</dbReference>
<dbReference type="Pfam" id="PF01494">
    <property type="entry name" value="FAD_binding_3"/>
    <property type="match status" value="1"/>
</dbReference>
<dbReference type="PRINTS" id="PR00420">
    <property type="entry name" value="RNGMNOXGNASE"/>
</dbReference>
<dbReference type="SUPFAM" id="SSF54373">
    <property type="entry name" value="FAD-linked reductases, C-terminal domain"/>
    <property type="match status" value="1"/>
</dbReference>
<dbReference type="SUPFAM" id="SSF51905">
    <property type="entry name" value="FAD/NAD(P)-binding domain"/>
    <property type="match status" value="1"/>
</dbReference>
<reference key="1">
    <citation type="journal article" date="2002" name="Nucleic Acids Res.">
        <title>Genome sequence of Shigella flexneri 2a: insights into pathogenicity through comparison with genomes of Escherichia coli K12 and O157.</title>
        <authorList>
            <person name="Jin Q."/>
            <person name="Yuan Z."/>
            <person name="Xu J."/>
            <person name="Wang Y."/>
            <person name="Shen Y."/>
            <person name="Lu W."/>
            <person name="Wang J."/>
            <person name="Liu H."/>
            <person name="Yang J."/>
            <person name="Yang F."/>
            <person name="Zhang X."/>
            <person name="Zhang J."/>
            <person name="Yang G."/>
            <person name="Wu H."/>
            <person name="Qu D."/>
            <person name="Dong J."/>
            <person name="Sun L."/>
            <person name="Xue Y."/>
            <person name="Zhao A."/>
            <person name="Gao Y."/>
            <person name="Zhu J."/>
            <person name="Kan B."/>
            <person name="Ding K."/>
            <person name="Chen S."/>
            <person name="Cheng H."/>
            <person name="Yao Z."/>
            <person name="He B."/>
            <person name="Chen R."/>
            <person name="Ma D."/>
            <person name="Qiang B."/>
            <person name="Wen Y."/>
            <person name="Hou Y."/>
            <person name="Yu J."/>
        </authorList>
    </citation>
    <scope>NUCLEOTIDE SEQUENCE [LARGE SCALE GENOMIC DNA]</scope>
    <source>
        <strain>301 / Serotype 2a</strain>
    </source>
</reference>
<reference key="2">
    <citation type="journal article" date="2003" name="Infect. Immun.">
        <title>Complete genome sequence and comparative genomics of Shigella flexneri serotype 2a strain 2457T.</title>
        <authorList>
            <person name="Wei J."/>
            <person name="Goldberg M.B."/>
            <person name="Burland V."/>
            <person name="Venkatesan M.M."/>
            <person name="Deng W."/>
            <person name="Fournier G."/>
            <person name="Mayhew G.F."/>
            <person name="Plunkett G. III"/>
            <person name="Rose D.J."/>
            <person name="Darling A."/>
            <person name="Mau B."/>
            <person name="Perna N.T."/>
            <person name="Payne S.M."/>
            <person name="Runyen-Janecky L.J."/>
            <person name="Zhou S."/>
            <person name="Schwartz D.C."/>
            <person name="Blattner F.R."/>
        </authorList>
    </citation>
    <scope>NUCLEOTIDE SEQUENCE [LARGE SCALE GENOMIC DNA]</scope>
    <source>
        <strain>ATCC 700930 / 2457T / Serotype 2a</strain>
    </source>
</reference>
<sequence>MSEDIFDAIIVGAGLAGSVAALVLAREGAQVLVIERGNSAGAKNVTGGRLYAHSLEHIIPGFADSAPVERLITHEKLAFMTEKSAMTMDYCNGDETSPSQRSYSVLRSKFDAWLMEQAEEAGAQLITGIRVDNLVQRDGKVVGVEADGDVIEAKTVLLADGVNSILAEKLGMAKRVKPTDVAVGVKELIELPKSVIEDRFQLQGNQGAACLFAGSPTDGLMGGGFLYTNENTLSLGLVCGLHHLHDAKKSVPQMLEDFKQHPAVAPLIAGGKLVEYSAHVVPEAGINMLPELVGDGVLIAGDAAGMCMNLGFTIRGMDLAIAAGEAAAKTVLSAMKSDDFSKQKLAEYRQHLESGPLRDMRMYQKLPAFLDNPRMFSGNPELAVGVARDLFTIDGSAPELMRKKILRHGKKVGFINLIKDGMKGVTVL</sequence>
<protein>
    <recommendedName>
        <fullName>Protein FixC</fullName>
    </recommendedName>
</protein>
<feature type="chain" id="PRO_0000200695" description="Protein FixC">
    <location>
        <begin position="1"/>
        <end position="428"/>
    </location>
</feature>
<accession>Q83SQ7</accession>
<accession>Q7C3B9</accession>
<name>FIXC_SHIFL</name>
<comment type="function">
    <text evidence="1">Could be part of an electron transfer system required for anaerobic carnitine reduction.</text>
</comment>
<comment type="cofactor">
    <cofactor evidence="2">
        <name>FAD</name>
        <dbReference type="ChEBI" id="CHEBI:57692"/>
    </cofactor>
</comment>
<comment type="similarity">
    <text evidence="2">Belongs to the ETF-QO/FixC family.</text>
</comment>
<evidence type="ECO:0000250" key="1"/>
<evidence type="ECO:0000305" key="2"/>
<organism>
    <name type="scientific">Shigella flexneri</name>
    <dbReference type="NCBI Taxonomy" id="623"/>
    <lineage>
        <taxon>Bacteria</taxon>
        <taxon>Pseudomonadati</taxon>
        <taxon>Pseudomonadota</taxon>
        <taxon>Gammaproteobacteria</taxon>
        <taxon>Enterobacterales</taxon>
        <taxon>Enterobacteriaceae</taxon>
        <taxon>Shigella</taxon>
    </lineage>
</organism>
<keyword id="KW-0249">Electron transport</keyword>
<keyword id="KW-0274">FAD</keyword>
<keyword id="KW-0285">Flavoprotein</keyword>
<keyword id="KW-0560">Oxidoreductase</keyword>
<keyword id="KW-1185">Reference proteome</keyword>
<keyword id="KW-0813">Transport</keyword>
<gene>
    <name type="primary">fixC</name>
    <name type="ordered locus">SF0040</name>
    <name type="ordered locus">S0042</name>
</gene>
<proteinExistence type="inferred from homology"/>